<sequence length="319" mass="33369">MNTQTRETTSMSDAQDKAATLIEALPWIQRFAGTTMVIKYGGNAMVNDELRRAFAEDIVFLHHVGIHPVVVHGGGPQINSMLGRLGIESEFKGGLRVTTPEAMDVVRMVLTGQVGRELVGLINSHGPYAVGMSGEDGGLLRAVRTGTVVDGEDVDLGLVGEVVGVDPAGIVDILDAGRIPVISTVAPEIVDGGDSVPGAARFQPTGQVLNVNADTAAAAVASALGASKLVILTDVEGLYANWPDKSSLISSLTASELRDMLPRLESGMIPKMAACLKAIDEGVERAHIVDGRLAHSMLLETFTTAGIGTQVVPDEETNA</sequence>
<organism>
    <name type="scientific">Pseudarthrobacter chlorophenolicus (strain ATCC 700700 / DSM 12829 / CIP 107037 / JCM 12360 / KCTC 9906 / NCIMB 13794 / A6)</name>
    <name type="common">Arthrobacter chlorophenolicus</name>
    <dbReference type="NCBI Taxonomy" id="452863"/>
    <lineage>
        <taxon>Bacteria</taxon>
        <taxon>Bacillati</taxon>
        <taxon>Actinomycetota</taxon>
        <taxon>Actinomycetes</taxon>
        <taxon>Micrococcales</taxon>
        <taxon>Micrococcaceae</taxon>
        <taxon>Pseudarthrobacter</taxon>
    </lineage>
</organism>
<feature type="chain" id="PRO_1000118332" description="Acetylglutamate kinase">
    <location>
        <begin position="1"/>
        <end position="319"/>
    </location>
</feature>
<feature type="binding site" evidence="1">
    <location>
        <begin position="74"/>
        <end position="75"/>
    </location>
    <ligand>
        <name>substrate</name>
    </ligand>
</feature>
<feature type="binding site" evidence="1">
    <location>
        <position position="96"/>
    </location>
    <ligand>
        <name>substrate</name>
    </ligand>
</feature>
<feature type="binding site" evidence="1">
    <location>
        <position position="210"/>
    </location>
    <ligand>
        <name>substrate</name>
    </ligand>
</feature>
<feature type="site" description="Transition state stabilizer" evidence="1">
    <location>
        <position position="39"/>
    </location>
</feature>
<feature type="site" description="Transition state stabilizer" evidence="1">
    <location>
        <position position="271"/>
    </location>
</feature>
<accession>B8HGC5</accession>
<evidence type="ECO:0000255" key="1">
    <source>
        <dbReference type="HAMAP-Rule" id="MF_00082"/>
    </source>
</evidence>
<dbReference type="EC" id="2.7.2.8" evidence="1"/>
<dbReference type="EMBL" id="CP001341">
    <property type="protein sequence ID" value="ACL39487.1"/>
    <property type="molecule type" value="Genomic_DNA"/>
</dbReference>
<dbReference type="RefSeq" id="WP_015936708.1">
    <property type="nucleotide sequence ID" value="NC_011886.1"/>
</dbReference>
<dbReference type="SMR" id="B8HGC5"/>
<dbReference type="STRING" id="452863.Achl_1499"/>
<dbReference type="KEGG" id="ach:Achl_1499"/>
<dbReference type="eggNOG" id="COG0548">
    <property type="taxonomic scope" value="Bacteria"/>
</dbReference>
<dbReference type="HOGENOM" id="CLU_053680_0_0_11"/>
<dbReference type="OrthoDB" id="9803155at2"/>
<dbReference type="UniPathway" id="UPA00068">
    <property type="reaction ID" value="UER00107"/>
</dbReference>
<dbReference type="Proteomes" id="UP000002505">
    <property type="component" value="Chromosome"/>
</dbReference>
<dbReference type="GO" id="GO:0005737">
    <property type="term" value="C:cytoplasm"/>
    <property type="evidence" value="ECO:0007669"/>
    <property type="project" value="UniProtKB-SubCell"/>
</dbReference>
<dbReference type="GO" id="GO:0003991">
    <property type="term" value="F:acetylglutamate kinase activity"/>
    <property type="evidence" value="ECO:0007669"/>
    <property type="project" value="UniProtKB-UniRule"/>
</dbReference>
<dbReference type="GO" id="GO:0005524">
    <property type="term" value="F:ATP binding"/>
    <property type="evidence" value="ECO:0007669"/>
    <property type="project" value="UniProtKB-UniRule"/>
</dbReference>
<dbReference type="GO" id="GO:0042450">
    <property type="term" value="P:arginine biosynthetic process via ornithine"/>
    <property type="evidence" value="ECO:0007669"/>
    <property type="project" value="UniProtKB-UniRule"/>
</dbReference>
<dbReference type="GO" id="GO:0006526">
    <property type="term" value="P:L-arginine biosynthetic process"/>
    <property type="evidence" value="ECO:0007669"/>
    <property type="project" value="UniProtKB-UniPathway"/>
</dbReference>
<dbReference type="CDD" id="cd04250">
    <property type="entry name" value="AAK_NAGK-C"/>
    <property type="match status" value="1"/>
</dbReference>
<dbReference type="FunFam" id="3.40.1160.10:FF:000004">
    <property type="entry name" value="Acetylglutamate kinase"/>
    <property type="match status" value="1"/>
</dbReference>
<dbReference type="Gene3D" id="3.40.1160.10">
    <property type="entry name" value="Acetylglutamate kinase-like"/>
    <property type="match status" value="1"/>
</dbReference>
<dbReference type="HAMAP" id="MF_00082">
    <property type="entry name" value="ArgB"/>
    <property type="match status" value="1"/>
</dbReference>
<dbReference type="InterPro" id="IPR036393">
    <property type="entry name" value="AceGlu_kinase-like_sf"/>
</dbReference>
<dbReference type="InterPro" id="IPR004662">
    <property type="entry name" value="AcgluKinase_fam"/>
</dbReference>
<dbReference type="InterPro" id="IPR037528">
    <property type="entry name" value="ArgB"/>
</dbReference>
<dbReference type="InterPro" id="IPR001048">
    <property type="entry name" value="Asp/Glu/Uridylate_kinase"/>
</dbReference>
<dbReference type="InterPro" id="IPR001057">
    <property type="entry name" value="Glu/AcGlu_kinase"/>
</dbReference>
<dbReference type="InterPro" id="IPR041727">
    <property type="entry name" value="NAGK-C"/>
</dbReference>
<dbReference type="NCBIfam" id="TIGR00761">
    <property type="entry name" value="argB"/>
    <property type="match status" value="1"/>
</dbReference>
<dbReference type="PANTHER" id="PTHR23342">
    <property type="entry name" value="N-ACETYLGLUTAMATE SYNTHASE"/>
    <property type="match status" value="1"/>
</dbReference>
<dbReference type="PANTHER" id="PTHR23342:SF0">
    <property type="entry name" value="N-ACETYLGLUTAMATE SYNTHASE, MITOCHONDRIAL"/>
    <property type="match status" value="1"/>
</dbReference>
<dbReference type="Pfam" id="PF00696">
    <property type="entry name" value="AA_kinase"/>
    <property type="match status" value="1"/>
</dbReference>
<dbReference type="PIRSF" id="PIRSF000728">
    <property type="entry name" value="NAGK"/>
    <property type="match status" value="1"/>
</dbReference>
<dbReference type="PRINTS" id="PR00474">
    <property type="entry name" value="GLU5KINASE"/>
</dbReference>
<dbReference type="SUPFAM" id="SSF53633">
    <property type="entry name" value="Carbamate kinase-like"/>
    <property type="match status" value="1"/>
</dbReference>
<keyword id="KW-0028">Amino-acid biosynthesis</keyword>
<keyword id="KW-0055">Arginine biosynthesis</keyword>
<keyword id="KW-0067">ATP-binding</keyword>
<keyword id="KW-0963">Cytoplasm</keyword>
<keyword id="KW-0418">Kinase</keyword>
<keyword id="KW-0547">Nucleotide-binding</keyword>
<keyword id="KW-0808">Transferase</keyword>
<name>ARGB_PSECP</name>
<comment type="function">
    <text evidence="1">Catalyzes the ATP-dependent phosphorylation of N-acetyl-L-glutamate.</text>
</comment>
<comment type="catalytic activity">
    <reaction evidence="1">
        <text>N-acetyl-L-glutamate + ATP = N-acetyl-L-glutamyl 5-phosphate + ADP</text>
        <dbReference type="Rhea" id="RHEA:14629"/>
        <dbReference type="ChEBI" id="CHEBI:30616"/>
        <dbReference type="ChEBI" id="CHEBI:44337"/>
        <dbReference type="ChEBI" id="CHEBI:57936"/>
        <dbReference type="ChEBI" id="CHEBI:456216"/>
        <dbReference type="EC" id="2.7.2.8"/>
    </reaction>
</comment>
<comment type="pathway">
    <text evidence="1">Amino-acid biosynthesis; L-arginine biosynthesis; N(2)-acetyl-L-ornithine from L-glutamate: step 2/4.</text>
</comment>
<comment type="subcellular location">
    <subcellularLocation>
        <location evidence="1">Cytoplasm</location>
    </subcellularLocation>
</comment>
<comment type="similarity">
    <text evidence="1">Belongs to the acetylglutamate kinase family. ArgB subfamily.</text>
</comment>
<protein>
    <recommendedName>
        <fullName evidence="1">Acetylglutamate kinase</fullName>
        <ecNumber evidence="1">2.7.2.8</ecNumber>
    </recommendedName>
    <alternativeName>
        <fullName evidence="1">N-acetyl-L-glutamate 5-phosphotransferase</fullName>
    </alternativeName>
    <alternativeName>
        <fullName evidence="1">NAG kinase</fullName>
        <shortName evidence="1">NAGK</shortName>
    </alternativeName>
</protein>
<reference key="1">
    <citation type="submission" date="2009-01" db="EMBL/GenBank/DDBJ databases">
        <title>Complete sequence of chromosome of Arthrobacter chlorophenolicus A6.</title>
        <authorList>
            <consortium name="US DOE Joint Genome Institute"/>
            <person name="Lucas S."/>
            <person name="Copeland A."/>
            <person name="Lapidus A."/>
            <person name="Glavina del Rio T."/>
            <person name="Tice H."/>
            <person name="Bruce D."/>
            <person name="Goodwin L."/>
            <person name="Pitluck S."/>
            <person name="Goltsman E."/>
            <person name="Clum A."/>
            <person name="Larimer F."/>
            <person name="Land M."/>
            <person name="Hauser L."/>
            <person name="Kyrpides N."/>
            <person name="Mikhailova N."/>
            <person name="Jansson J."/>
            <person name="Richardson P."/>
        </authorList>
    </citation>
    <scope>NUCLEOTIDE SEQUENCE [LARGE SCALE GENOMIC DNA]</scope>
    <source>
        <strain>ATCC 700700 / DSM 12829 / CIP 107037 / JCM 12360 / KCTC 9906 / NCIMB 13794 / A6</strain>
    </source>
</reference>
<proteinExistence type="inferred from homology"/>
<gene>
    <name evidence="1" type="primary">argB</name>
    <name type="ordered locus">Achl_1499</name>
</gene>